<evidence type="ECO:0000250" key="1">
    <source>
        <dbReference type="UniProtKB" id="P28711"/>
    </source>
</evidence>
<evidence type="ECO:0000305" key="2"/>
<gene>
    <name type="ORF">ORF3</name>
</gene>
<feature type="chain" id="PRO_0000100121" description="Minor capsid protein VP2">
    <location>
        <begin position="1"/>
        <end position="133"/>
    </location>
</feature>
<protein>
    <recommendedName>
        <fullName>Minor capsid protein VP2</fullName>
    </recommendedName>
</protein>
<sequence length="133" mass="14780">MSVAAAITAGASAAQAGTGLIGSIANAIHEGTRLKLQGQALGAQIKFQEAENKFNRDRFEFDKLNTERWFRLAKEQQSLVYELNTKGPAMRAQAMMDAGFRNNLYSNGNQLTFNEVREAQLSAEKRFYNPSLF</sequence>
<organismHost>
    <name type="scientific">Canis lupus familiaris</name>
    <name type="common">Dog</name>
    <name type="synonym">Canis familiaris</name>
    <dbReference type="NCBI Taxonomy" id="9615"/>
</organismHost>
<organism>
    <name type="scientific">Canine calicivirus (strain 48)</name>
    <name type="common">CaCV</name>
    <dbReference type="NCBI Taxonomy" id="292348"/>
    <lineage>
        <taxon>Viruses</taxon>
        <taxon>Riboviria</taxon>
        <taxon>Orthornavirae</taxon>
        <taxon>Pisuviricota</taxon>
        <taxon>Pisoniviricetes</taxon>
        <taxon>Picornavirales</taxon>
        <taxon>Caliciviridae</taxon>
        <taxon>Vesivirus</taxon>
        <taxon>Canine vesivirus</taxon>
    </lineage>
</organism>
<dbReference type="EMBL" id="AF053720">
    <property type="protein sequence ID" value="AAC16447.1"/>
    <property type="molecule type" value="Genomic_RNA"/>
</dbReference>
<dbReference type="EMBL" id="AB070225">
    <property type="protein sequence ID" value="BAB83603.1"/>
    <property type="molecule type" value="Genomic_RNA"/>
</dbReference>
<dbReference type="KEGG" id="vg:956317"/>
<dbReference type="Proteomes" id="UP000161743">
    <property type="component" value="Segment"/>
</dbReference>
<dbReference type="GO" id="GO:0030430">
    <property type="term" value="C:host cell cytoplasm"/>
    <property type="evidence" value="ECO:0007669"/>
    <property type="project" value="UniProtKB-SubCell"/>
</dbReference>
<dbReference type="GO" id="GO:0098021">
    <property type="term" value="C:viral capsid, decoration"/>
    <property type="evidence" value="ECO:0007669"/>
    <property type="project" value="UniProtKB-KW"/>
</dbReference>
<dbReference type="InterPro" id="IPR007996">
    <property type="entry name" value="Vesivirus_VP2"/>
</dbReference>
<dbReference type="Pfam" id="PF05332">
    <property type="entry name" value="Vesi_VP2"/>
    <property type="match status" value="1"/>
</dbReference>
<accession>O72121</accession>
<proteinExistence type="inferred from homology"/>
<comment type="function">
    <text evidence="1">Minor structural protein that forms a portal-like structure at a unique three-fold axis of symmetry, following binding to the host receptor. The channel formed by VP2 may allow the delivery of the viral genome through the host endosomal membrane.</text>
</comment>
<comment type="subunit">
    <text evidence="1">Homooligomer. The portal-like structure consists in 12 copies of VP2. Interacts with capsid protein VP1.</text>
</comment>
<comment type="subcellular location">
    <subcellularLocation>
        <location evidence="1">Virion</location>
    </subcellularLocation>
    <subcellularLocation>
        <location evidence="2">Host cytoplasm</location>
    </subcellularLocation>
</comment>
<comment type="domain">
    <text evidence="1">The N-terminus domain points away from the virion surface.</text>
</comment>
<comment type="miscellaneous">
    <text evidence="1">Translated by a ribosomal termination-reinitiation process from the bicistronic mRNA coding for VP1 and VP2.</text>
</comment>
<comment type="similarity">
    <text evidence="2">Belongs to the vesivirus VP2 protein family.</text>
</comment>
<name>VP2_CACV4</name>
<reference key="1">
    <citation type="journal article" date="1999" name="J. Gen. Virol.">
        <title>Organization of the canine calicivirus genome from the RNA polymerase gene to the poly(A) tail.</title>
        <authorList>
            <person name="Roerink F."/>
            <person name="Hashimoto M."/>
            <person name="Tohya Y."/>
            <person name="Mochizuki M."/>
        </authorList>
    </citation>
    <scope>NUCLEOTIDE SEQUENCE [GENOMIC RNA]</scope>
</reference>
<reference key="2">
    <citation type="journal article" date="2002" name="Virus Genes">
        <title>Complete nucleotide sequence, genome organization and phylogenic analysis of the canine calicivirus.</title>
        <authorList>
            <person name="Matsuura Y."/>
            <person name="Tohya Y."/>
            <person name="Nakamura K."/>
            <person name="Shimojima M."/>
            <person name="Roerink F."/>
            <person name="Mochizuki M."/>
            <person name="Takase K."/>
            <person name="Akashi H."/>
            <person name="Sugimura T."/>
        </authorList>
    </citation>
    <scope>NUCLEOTIDE SEQUENCE [GENOMIC RNA]</scope>
</reference>
<keyword id="KW-1232">Capsid decoration protein</keyword>
<keyword id="KW-0167">Capsid protein</keyword>
<keyword id="KW-1035">Host cytoplasm</keyword>
<keyword id="KW-0946">Virion</keyword>